<comment type="catalytic activity">
    <reaction evidence="1">
        <text>tRNA(Cys) + L-cysteine + ATP = L-cysteinyl-tRNA(Cys) + AMP + diphosphate</text>
        <dbReference type="Rhea" id="RHEA:17773"/>
        <dbReference type="Rhea" id="RHEA-COMP:9661"/>
        <dbReference type="Rhea" id="RHEA-COMP:9679"/>
        <dbReference type="ChEBI" id="CHEBI:30616"/>
        <dbReference type="ChEBI" id="CHEBI:33019"/>
        <dbReference type="ChEBI" id="CHEBI:35235"/>
        <dbReference type="ChEBI" id="CHEBI:78442"/>
        <dbReference type="ChEBI" id="CHEBI:78517"/>
        <dbReference type="ChEBI" id="CHEBI:456215"/>
        <dbReference type="EC" id="6.1.1.16"/>
    </reaction>
</comment>
<comment type="cofactor">
    <cofactor evidence="1">
        <name>Zn(2+)</name>
        <dbReference type="ChEBI" id="CHEBI:29105"/>
    </cofactor>
    <text evidence="1">Binds 1 zinc ion per subunit.</text>
</comment>
<comment type="subunit">
    <text evidence="1">Monomer.</text>
</comment>
<comment type="subcellular location">
    <subcellularLocation>
        <location evidence="1">Cytoplasm</location>
    </subcellularLocation>
</comment>
<comment type="similarity">
    <text evidence="1">Belongs to the class-I aminoacyl-tRNA synthetase family.</text>
</comment>
<name>SYC_BURPS</name>
<dbReference type="EC" id="6.1.1.16" evidence="1"/>
<dbReference type="EMBL" id="BX571965">
    <property type="protein sequence ID" value="CAH36245.1"/>
    <property type="molecule type" value="Genomic_DNA"/>
</dbReference>
<dbReference type="RefSeq" id="WP_004192752.1">
    <property type="nucleotide sequence ID" value="NZ_CP009538.1"/>
</dbReference>
<dbReference type="RefSeq" id="YP_108838.1">
    <property type="nucleotide sequence ID" value="NC_006350.1"/>
</dbReference>
<dbReference type="SMR" id="Q63SS8"/>
<dbReference type="STRING" id="272560.BPSL2243"/>
<dbReference type="GeneID" id="93060794"/>
<dbReference type="KEGG" id="bps:BPSL2243"/>
<dbReference type="PATRIC" id="fig|272560.51.peg.3194"/>
<dbReference type="eggNOG" id="COG0215">
    <property type="taxonomic scope" value="Bacteria"/>
</dbReference>
<dbReference type="Proteomes" id="UP000000605">
    <property type="component" value="Chromosome 1"/>
</dbReference>
<dbReference type="GO" id="GO:0005829">
    <property type="term" value="C:cytosol"/>
    <property type="evidence" value="ECO:0007669"/>
    <property type="project" value="TreeGrafter"/>
</dbReference>
<dbReference type="GO" id="GO:0005524">
    <property type="term" value="F:ATP binding"/>
    <property type="evidence" value="ECO:0007669"/>
    <property type="project" value="UniProtKB-UniRule"/>
</dbReference>
<dbReference type="GO" id="GO:0004817">
    <property type="term" value="F:cysteine-tRNA ligase activity"/>
    <property type="evidence" value="ECO:0007669"/>
    <property type="project" value="UniProtKB-UniRule"/>
</dbReference>
<dbReference type="GO" id="GO:0008270">
    <property type="term" value="F:zinc ion binding"/>
    <property type="evidence" value="ECO:0007669"/>
    <property type="project" value="UniProtKB-UniRule"/>
</dbReference>
<dbReference type="GO" id="GO:0006423">
    <property type="term" value="P:cysteinyl-tRNA aminoacylation"/>
    <property type="evidence" value="ECO:0007669"/>
    <property type="project" value="UniProtKB-UniRule"/>
</dbReference>
<dbReference type="CDD" id="cd07963">
    <property type="entry name" value="Anticodon_Ia_Cys"/>
    <property type="match status" value="1"/>
</dbReference>
<dbReference type="CDD" id="cd00672">
    <property type="entry name" value="CysRS_core"/>
    <property type="match status" value="1"/>
</dbReference>
<dbReference type="FunFam" id="3.40.50.620:FF:000009">
    <property type="entry name" value="Cysteine--tRNA ligase"/>
    <property type="match status" value="1"/>
</dbReference>
<dbReference type="Gene3D" id="1.20.120.1910">
    <property type="entry name" value="Cysteine-tRNA ligase, C-terminal anti-codon recognition domain"/>
    <property type="match status" value="1"/>
</dbReference>
<dbReference type="Gene3D" id="3.40.50.620">
    <property type="entry name" value="HUPs"/>
    <property type="match status" value="1"/>
</dbReference>
<dbReference type="HAMAP" id="MF_00041">
    <property type="entry name" value="Cys_tRNA_synth"/>
    <property type="match status" value="1"/>
</dbReference>
<dbReference type="InterPro" id="IPR015803">
    <property type="entry name" value="Cys-tRNA-ligase"/>
</dbReference>
<dbReference type="InterPro" id="IPR015273">
    <property type="entry name" value="Cys-tRNA-synt_Ia_DALR"/>
</dbReference>
<dbReference type="InterPro" id="IPR024909">
    <property type="entry name" value="Cys-tRNA/MSH_ligase"/>
</dbReference>
<dbReference type="InterPro" id="IPR056411">
    <property type="entry name" value="CysS_C"/>
</dbReference>
<dbReference type="InterPro" id="IPR014729">
    <property type="entry name" value="Rossmann-like_a/b/a_fold"/>
</dbReference>
<dbReference type="InterPro" id="IPR032678">
    <property type="entry name" value="tRNA-synt_1_cat_dom"/>
</dbReference>
<dbReference type="InterPro" id="IPR009080">
    <property type="entry name" value="tRNAsynth_Ia_anticodon-bd"/>
</dbReference>
<dbReference type="NCBIfam" id="TIGR00435">
    <property type="entry name" value="cysS"/>
    <property type="match status" value="1"/>
</dbReference>
<dbReference type="PANTHER" id="PTHR10890:SF3">
    <property type="entry name" value="CYSTEINE--TRNA LIGASE, CYTOPLASMIC"/>
    <property type="match status" value="1"/>
</dbReference>
<dbReference type="PANTHER" id="PTHR10890">
    <property type="entry name" value="CYSTEINYL-TRNA SYNTHETASE"/>
    <property type="match status" value="1"/>
</dbReference>
<dbReference type="Pfam" id="PF23493">
    <property type="entry name" value="CysS_C"/>
    <property type="match status" value="1"/>
</dbReference>
<dbReference type="Pfam" id="PF09190">
    <property type="entry name" value="DALR_2"/>
    <property type="match status" value="1"/>
</dbReference>
<dbReference type="Pfam" id="PF01406">
    <property type="entry name" value="tRNA-synt_1e"/>
    <property type="match status" value="1"/>
</dbReference>
<dbReference type="PRINTS" id="PR00983">
    <property type="entry name" value="TRNASYNTHCYS"/>
</dbReference>
<dbReference type="SMART" id="SM00840">
    <property type="entry name" value="DALR_2"/>
    <property type="match status" value="1"/>
</dbReference>
<dbReference type="SUPFAM" id="SSF47323">
    <property type="entry name" value="Anticodon-binding domain of a subclass of class I aminoacyl-tRNA synthetases"/>
    <property type="match status" value="1"/>
</dbReference>
<dbReference type="SUPFAM" id="SSF52374">
    <property type="entry name" value="Nucleotidylyl transferase"/>
    <property type="match status" value="1"/>
</dbReference>
<gene>
    <name evidence="1" type="primary">cysS</name>
    <name type="ordered locus">BPSL2243</name>
</gene>
<feature type="chain" id="PRO_0000159370" description="Cysteine--tRNA ligase">
    <location>
        <begin position="1"/>
        <end position="465"/>
    </location>
</feature>
<feature type="short sequence motif" description="'HIGH' region">
    <location>
        <begin position="32"/>
        <end position="42"/>
    </location>
</feature>
<feature type="short sequence motif" description="'KMSKS' region">
    <location>
        <begin position="271"/>
        <end position="275"/>
    </location>
</feature>
<feature type="binding site" evidence="1">
    <location>
        <position position="30"/>
    </location>
    <ligand>
        <name>Zn(2+)</name>
        <dbReference type="ChEBI" id="CHEBI:29105"/>
    </ligand>
</feature>
<feature type="binding site" evidence="1">
    <location>
        <position position="214"/>
    </location>
    <ligand>
        <name>Zn(2+)</name>
        <dbReference type="ChEBI" id="CHEBI:29105"/>
    </ligand>
</feature>
<feature type="binding site" evidence="1">
    <location>
        <position position="239"/>
    </location>
    <ligand>
        <name>Zn(2+)</name>
        <dbReference type="ChEBI" id="CHEBI:29105"/>
    </ligand>
</feature>
<feature type="binding site" evidence="1">
    <location>
        <position position="243"/>
    </location>
    <ligand>
        <name>Zn(2+)</name>
        <dbReference type="ChEBI" id="CHEBI:29105"/>
    </ligand>
</feature>
<feature type="binding site" evidence="1">
    <location>
        <position position="274"/>
    </location>
    <ligand>
        <name>ATP</name>
        <dbReference type="ChEBI" id="CHEBI:30616"/>
    </ligand>
</feature>
<protein>
    <recommendedName>
        <fullName evidence="1">Cysteine--tRNA ligase</fullName>
        <ecNumber evidence="1">6.1.1.16</ecNumber>
    </recommendedName>
    <alternativeName>
        <fullName evidence="1">Cysteinyl-tRNA synthetase</fullName>
        <shortName evidence="1">CysRS</shortName>
    </alternativeName>
</protein>
<accession>Q63SS8</accession>
<reference key="1">
    <citation type="journal article" date="2004" name="Proc. Natl. Acad. Sci. U.S.A.">
        <title>Genomic plasticity of the causative agent of melioidosis, Burkholderia pseudomallei.</title>
        <authorList>
            <person name="Holden M.T.G."/>
            <person name="Titball R.W."/>
            <person name="Peacock S.J."/>
            <person name="Cerdeno-Tarraga A.-M."/>
            <person name="Atkins T."/>
            <person name="Crossman L.C."/>
            <person name="Pitt T."/>
            <person name="Churcher C."/>
            <person name="Mungall K.L."/>
            <person name="Bentley S.D."/>
            <person name="Sebaihia M."/>
            <person name="Thomson N.R."/>
            <person name="Bason N."/>
            <person name="Beacham I.R."/>
            <person name="Brooks K."/>
            <person name="Brown K.A."/>
            <person name="Brown N.F."/>
            <person name="Challis G.L."/>
            <person name="Cherevach I."/>
            <person name="Chillingworth T."/>
            <person name="Cronin A."/>
            <person name="Crossett B."/>
            <person name="Davis P."/>
            <person name="DeShazer D."/>
            <person name="Feltwell T."/>
            <person name="Fraser A."/>
            <person name="Hance Z."/>
            <person name="Hauser H."/>
            <person name="Holroyd S."/>
            <person name="Jagels K."/>
            <person name="Keith K.E."/>
            <person name="Maddison M."/>
            <person name="Moule S."/>
            <person name="Price C."/>
            <person name="Quail M.A."/>
            <person name="Rabbinowitsch E."/>
            <person name="Rutherford K."/>
            <person name="Sanders M."/>
            <person name="Simmonds M."/>
            <person name="Songsivilai S."/>
            <person name="Stevens K."/>
            <person name="Tumapa S."/>
            <person name="Vesaratchavest M."/>
            <person name="Whitehead S."/>
            <person name="Yeats C."/>
            <person name="Barrell B.G."/>
            <person name="Oyston P.C.F."/>
            <person name="Parkhill J."/>
        </authorList>
    </citation>
    <scope>NUCLEOTIDE SEQUENCE [LARGE SCALE GENOMIC DNA]</scope>
    <source>
        <strain>K96243</strain>
    </source>
</reference>
<sequence length="465" mass="52366">MESLRIYNTLARDKQDFVPRQPGEVRMYVCGITVYDYCHIGHARMVVVFDIVQRWLRARGYRVTYVRNITDIDDKIIRRAVENGETIQSLTRRFTDAMNADFDALGVERPDLEPRATEFIPQMLGMIEKLEANGYAYQAKDGDVNYSVRKFANYGRLSGKSLEDLRAGERVAANDAKEDPLDFVLWKRAKPQEPAGASWESKYGAGRPGWHIECSAMGCTLLGAHFDIHGGGQDLQFPHHENEIAQSEGATGQTFVNYWMHNGFVQVDSEKMSKSLGNFFTIREVLEKFDAEVVRFFIVRTHYRSPLNYSDVHLDDARASLTRLYTALKDATPDAQPLDWSEAHAQRFAAAMNDDFNTAVAVAVLFELATEVNRTREPALARQLRLLAGLLGLLGREPREFLQHAAGAARTGALEPHEIEARIAARVAAKQAKNYAEADRIRAELLEAGIALEDKPGGSTEWRRV</sequence>
<keyword id="KW-0030">Aminoacyl-tRNA synthetase</keyword>
<keyword id="KW-0067">ATP-binding</keyword>
<keyword id="KW-0963">Cytoplasm</keyword>
<keyword id="KW-0436">Ligase</keyword>
<keyword id="KW-0479">Metal-binding</keyword>
<keyword id="KW-0547">Nucleotide-binding</keyword>
<keyword id="KW-0648">Protein biosynthesis</keyword>
<keyword id="KW-1185">Reference proteome</keyword>
<keyword id="KW-0862">Zinc</keyword>
<proteinExistence type="inferred from homology"/>
<evidence type="ECO:0000255" key="1">
    <source>
        <dbReference type="HAMAP-Rule" id="MF_00041"/>
    </source>
</evidence>
<organism>
    <name type="scientific">Burkholderia pseudomallei (strain K96243)</name>
    <dbReference type="NCBI Taxonomy" id="272560"/>
    <lineage>
        <taxon>Bacteria</taxon>
        <taxon>Pseudomonadati</taxon>
        <taxon>Pseudomonadota</taxon>
        <taxon>Betaproteobacteria</taxon>
        <taxon>Burkholderiales</taxon>
        <taxon>Burkholderiaceae</taxon>
        <taxon>Burkholderia</taxon>
        <taxon>pseudomallei group</taxon>
    </lineage>
</organism>